<dbReference type="EMBL" id="BC135330">
    <property type="protein sequence ID" value="AAI35331.1"/>
    <property type="status" value="ALT_INIT"/>
    <property type="molecule type" value="mRNA"/>
</dbReference>
<dbReference type="RefSeq" id="NP_001116274.1">
    <property type="nucleotide sequence ID" value="NM_001122802.1"/>
</dbReference>
<dbReference type="SMR" id="A4QNB6"/>
<dbReference type="FunCoup" id="A4QNB6">
    <property type="interactions" value="35"/>
</dbReference>
<dbReference type="STRING" id="8364.ENSXETP00000014016"/>
<dbReference type="PaxDb" id="8364-ENSXETP00000021426"/>
<dbReference type="GeneID" id="100125131"/>
<dbReference type="KEGG" id="xtr:100125131"/>
<dbReference type="AGR" id="Xenbase:XB-GENE-949640"/>
<dbReference type="CTD" id="155051"/>
<dbReference type="Xenbase" id="XB-GENE-949640">
    <property type="gene designation" value="crygn"/>
</dbReference>
<dbReference type="eggNOG" id="ENOG502QV8X">
    <property type="taxonomic scope" value="Eukaryota"/>
</dbReference>
<dbReference type="HOGENOM" id="CLU_081883_1_0_1"/>
<dbReference type="InParanoid" id="A4QNB6"/>
<dbReference type="OMA" id="WQAHSAN"/>
<dbReference type="OrthoDB" id="5976022at2759"/>
<dbReference type="PhylomeDB" id="A4QNB6"/>
<dbReference type="Proteomes" id="UP000008143">
    <property type="component" value="Chromosome 6"/>
</dbReference>
<dbReference type="Bgee" id="ENSXETG00000009726">
    <property type="expression patterns" value="Expressed in embryo and 1 other cell type or tissue"/>
</dbReference>
<dbReference type="GO" id="GO:0005212">
    <property type="term" value="F:structural constituent of eye lens"/>
    <property type="evidence" value="ECO:0007669"/>
    <property type="project" value="UniProtKB-KW"/>
</dbReference>
<dbReference type="FunFam" id="2.60.20.10:FF:000007">
    <property type="entry name" value="Crystallin gamma N"/>
    <property type="match status" value="1"/>
</dbReference>
<dbReference type="FunFam" id="2.60.20.10:FF:000003">
    <property type="entry name" value="Crystallin gamma S"/>
    <property type="match status" value="1"/>
</dbReference>
<dbReference type="Gene3D" id="2.60.20.10">
    <property type="entry name" value="Crystallins"/>
    <property type="match status" value="2"/>
</dbReference>
<dbReference type="InterPro" id="IPR050252">
    <property type="entry name" value="Beta/Gamma-Crystallin"/>
</dbReference>
<dbReference type="InterPro" id="IPR001064">
    <property type="entry name" value="Beta/gamma_crystallin"/>
</dbReference>
<dbReference type="InterPro" id="IPR011024">
    <property type="entry name" value="G_crystallin-like"/>
</dbReference>
<dbReference type="PANTHER" id="PTHR11818">
    <property type="entry name" value="BETA/GAMMA CRYSTALLIN"/>
    <property type="match status" value="1"/>
</dbReference>
<dbReference type="PANTHER" id="PTHR11818:SF22">
    <property type="entry name" value="GAMMA-CRYSTALLIN N"/>
    <property type="match status" value="1"/>
</dbReference>
<dbReference type="Pfam" id="PF00030">
    <property type="entry name" value="Crystall"/>
    <property type="match status" value="2"/>
</dbReference>
<dbReference type="PRINTS" id="PR01367">
    <property type="entry name" value="BGCRYSTALLIN"/>
</dbReference>
<dbReference type="SMART" id="SM00247">
    <property type="entry name" value="XTALbg"/>
    <property type="match status" value="2"/>
</dbReference>
<dbReference type="SUPFAM" id="SSF49695">
    <property type="entry name" value="gamma-Crystallin-like"/>
    <property type="match status" value="1"/>
</dbReference>
<dbReference type="PROSITE" id="PS50915">
    <property type="entry name" value="CRYSTALLIN_BETA_GAMMA"/>
    <property type="match status" value="4"/>
</dbReference>
<accession>A4QNB6</accession>
<evidence type="ECO:0000250" key="1"/>
<evidence type="ECO:0000255" key="2">
    <source>
        <dbReference type="PROSITE-ProRule" id="PRU00028"/>
    </source>
</evidence>
<evidence type="ECO:0000305" key="3"/>
<sequence>MSQYSGKIIFYEGKCFTGRKLEVFGDCDNFQDKGFMNRVNSIRVETGAWICYDHPDFKGQQYILERGEYPDFHRWNGHNDHMGSCKPVRMHGERYRLELFEGCNFTGQCMEFCEDCPFLQGRGWNKNCVNACKVYGDGAWVLYEEPNYRGRMYIVERGDYRSFNDWQSQSANIQSVRRVVNYF</sequence>
<gene>
    <name type="primary">crygn</name>
</gene>
<name>CRGN_XENTR</name>
<keyword id="KW-0273">Eye lens protein</keyword>
<keyword id="KW-1185">Reference proteome</keyword>
<keyword id="KW-0677">Repeat</keyword>
<protein>
    <recommendedName>
        <fullName>Gamma-crystallin N</fullName>
    </recommendedName>
    <alternativeName>
        <fullName>Gamma-N-crystallin</fullName>
    </alternativeName>
</protein>
<comment type="function">
    <text evidence="1">Crystallins are the dominant structural components of the vertebrate eye lens.</text>
</comment>
<comment type="subunit">
    <text evidence="1">Monomer.</text>
</comment>
<comment type="domain">
    <text evidence="3">Has a two-domain beta-structure, folded into four very similar Greek key motifs.</text>
</comment>
<comment type="similarity">
    <text evidence="3">Belongs to the beta/gamma-crystallin family.</text>
</comment>
<comment type="sequence caution" evidence="3">
    <conflict type="erroneous initiation">
        <sequence resource="EMBL-CDS" id="AAI35331"/>
    </conflict>
    <text>Extended N-terminus.</text>
</comment>
<proteinExistence type="evidence at transcript level"/>
<reference key="1">
    <citation type="submission" date="2007-03" db="EMBL/GenBank/DDBJ databases">
        <authorList>
            <consortium name="NIH - Xenopus Gene Collection (XGC) project"/>
        </authorList>
    </citation>
    <scope>NUCLEOTIDE SEQUENCE [LARGE SCALE MRNA]</scope>
    <source>
        <tissue>Embryo</tissue>
    </source>
</reference>
<feature type="chain" id="PRO_0000311285" description="Gamma-crystallin N">
    <location>
        <begin position="1"/>
        <end position="183"/>
    </location>
</feature>
<feature type="domain" description="Beta/gamma crystallin 'Greek key' 1" evidence="2">
    <location>
        <begin position="6"/>
        <end position="46"/>
    </location>
</feature>
<feature type="domain" description="Beta/gamma crystallin 'Greek key' 2" evidence="2">
    <location>
        <begin position="47"/>
        <end position="89"/>
    </location>
</feature>
<feature type="domain" description="Beta/gamma crystallin 'Greek key' 3" evidence="2">
    <location>
        <begin position="95"/>
        <end position="136"/>
    </location>
</feature>
<feature type="domain" description="Beta/gamma crystallin 'Greek key' 4" evidence="2">
    <location>
        <begin position="138"/>
        <end position="180"/>
    </location>
</feature>
<feature type="sequence conflict" description="In Ref. 1; AAI35331." evidence="3" ref="1">
    <original>M</original>
    <variation>I</variation>
    <location>
        <position position="1"/>
    </location>
</feature>
<organism>
    <name type="scientific">Xenopus tropicalis</name>
    <name type="common">Western clawed frog</name>
    <name type="synonym">Silurana tropicalis</name>
    <dbReference type="NCBI Taxonomy" id="8364"/>
    <lineage>
        <taxon>Eukaryota</taxon>
        <taxon>Metazoa</taxon>
        <taxon>Chordata</taxon>
        <taxon>Craniata</taxon>
        <taxon>Vertebrata</taxon>
        <taxon>Euteleostomi</taxon>
        <taxon>Amphibia</taxon>
        <taxon>Batrachia</taxon>
        <taxon>Anura</taxon>
        <taxon>Pipoidea</taxon>
        <taxon>Pipidae</taxon>
        <taxon>Xenopodinae</taxon>
        <taxon>Xenopus</taxon>
        <taxon>Silurana</taxon>
    </lineage>
</organism>